<evidence type="ECO:0000250" key="1"/>
<evidence type="ECO:0000255" key="2"/>
<evidence type="ECO:0000255" key="3">
    <source>
        <dbReference type="PROSITE-ProRule" id="PRU00274"/>
    </source>
</evidence>
<evidence type="ECO:0000305" key="4"/>
<sequence length="314" mass="34999">MACGSVDPQGLLSPPLSSARLSNVPHVEGPWFWSCGQTNISCKVVNGKVVEVGKWPWQVSILFLGMYICSGSLIHHHWVLTAAHCLQRSKNPANYTVKVGVQTLPDNSSSELLVTSIVIHENFINHMSHDIAILKLKYPVTWSPFIQPICLPEVNFKPSIGTMCWVIGWGLEKAKGAPKTPYSVQGVAVRIVNNEICNHRYQFLLLKNQKKFIGNDMLCTSPEWGLDTCQDASGSSLVCQMNKTWIQMGVVSWNFGCGRRQFPSIYTSTSHFTQWIKRQIGDLKFASMAVPSFLSPFILTGYILLVSLGSLWLL</sequence>
<gene>
    <name type="primary">Prss46</name>
    <name type="synonym">Tessp6</name>
</gene>
<organism>
    <name type="scientific">Rattus norvegicus</name>
    <name type="common">Rat</name>
    <dbReference type="NCBI Taxonomy" id="10116"/>
    <lineage>
        <taxon>Eukaryota</taxon>
        <taxon>Metazoa</taxon>
        <taxon>Chordata</taxon>
        <taxon>Craniata</taxon>
        <taxon>Vertebrata</taxon>
        <taxon>Euteleostomi</taxon>
        <taxon>Mammalia</taxon>
        <taxon>Eutheria</taxon>
        <taxon>Euarchontoglires</taxon>
        <taxon>Glires</taxon>
        <taxon>Rodentia</taxon>
        <taxon>Myomorpha</taxon>
        <taxon>Muroidea</taxon>
        <taxon>Muridae</taxon>
        <taxon>Murinae</taxon>
        <taxon>Rattus</taxon>
    </lineage>
</organism>
<reference key="1">
    <citation type="submission" date="2005-07" db="EMBL/GenBank/DDBJ databases">
        <authorList>
            <person name="Mural R.J."/>
            <person name="Adams M.D."/>
            <person name="Myers E.W."/>
            <person name="Smith H.O."/>
            <person name="Venter J.C."/>
        </authorList>
    </citation>
    <scope>NUCLEOTIDE SEQUENCE [LARGE SCALE GENOMIC DNA] OF 1-230</scope>
</reference>
<reference key="2">
    <citation type="journal article" date="2004" name="Genome Res.">
        <title>A genomic analysis of rat proteases and protease inhibitors.</title>
        <authorList>
            <person name="Puente X.S."/>
            <person name="Lopez-Otin C."/>
        </authorList>
    </citation>
    <scope>IDENTIFICATION</scope>
    <source>
        <strain>Sprague-Dawley</strain>
    </source>
</reference>
<proteinExistence type="evidence at transcript level"/>
<feature type="chain" id="PRO_0000418334" description="Serine protease 46">
    <location>
        <begin position="1"/>
        <end position="314"/>
    </location>
</feature>
<feature type="transmembrane region" description="Helical" evidence="2">
    <location>
        <begin position="293"/>
        <end position="313"/>
    </location>
</feature>
<feature type="domain" description="Peptidase S1" evidence="3">
    <location>
        <begin position="44"/>
        <end position="281"/>
    </location>
</feature>
<feature type="active site" description="Charge relay system" evidence="1">
    <location>
        <position position="84"/>
    </location>
</feature>
<feature type="active site" description="Charge relay system" evidence="1">
    <location>
        <position position="130"/>
    </location>
</feature>
<feature type="active site" description="Charge relay system" evidence="1">
    <location>
        <position position="233"/>
    </location>
</feature>
<feature type="disulfide bond" evidence="3">
    <location>
        <begin position="69"/>
        <end position="85"/>
    </location>
</feature>
<feature type="disulfide bond" evidence="3">
    <location>
        <begin position="164"/>
        <end position="239"/>
    </location>
</feature>
<feature type="disulfide bond" evidence="3">
    <location>
        <begin position="197"/>
        <end position="219"/>
    </location>
</feature>
<feature type="disulfide bond" evidence="3">
    <location>
        <begin position="229"/>
        <end position="257"/>
    </location>
</feature>
<protein>
    <recommendedName>
        <fullName>Serine protease 46</fullName>
        <ecNumber>3.4.21.-</ecNumber>
    </recommendedName>
    <alternativeName>
        <fullName>Testis-specific serine protease-6</fullName>
    </alternativeName>
</protein>
<comment type="subcellular location">
    <subcellularLocation>
        <location evidence="4">Membrane</location>
        <topology evidence="4">Single-pass membrane protein</topology>
    </subcellularLocation>
</comment>
<comment type="similarity">
    <text evidence="3">Belongs to the peptidase S1 family.</text>
</comment>
<keyword id="KW-1015">Disulfide bond</keyword>
<keyword id="KW-0378">Hydrolase</keyword>
<keyword id="KW-0472">Membrane</keyword>
<keyword id="KW-0645">Protease</keyword>
<keyword id="KW-1185">Reference proteome</keyword>
<keyword id="KW-0720">Serine protease</keyword>
<keyword id="KW-0812">Transmembrane</keyword>
<keyword id="KW-1133">Transmembrane helix</keyword>
<accession>Q6IE63</accession>
<dbReference type="EC" id="3.4.21.-"/>
<dbReference type="EMBL" id="CH473984">
    <property type="protein sequence ID" value="EDL77052.1"/>
    <property type="molecule type" value="Genomic_DNA"/>
</dbReference>
<dbReference type="EMBL" id="BN000330">
    <property type="protein sequence ID" value="CAE48385.1"/>
    <property type="molecule type" value="mRNA"/>
</dbReference>
<dbReference type="RefSeq" id="NP_001008865.2">
    <property type="nucleotide sequence ID" value="NM_001008865.2"/>
</dbReference>
<dbReference type="RefSeq" id="XP_006244055.1">
    <property type="nucleotide sequence ID" value="XM_006243993.2"/>
</dbReference>
<dbReference type="SMR" id="Q6IE63"/>
<dbReference type="FunCoup" id="Q6IE63">
    <property type="interactions" value="20"/>
</dbReference>
<dbReference type="STRING" id="10116.ENSRNOP00000028479"/>
<dbReference type="MEROPS" id="S01.250"/>
<dbReference type="PaxDb" id="10116-ENSRNOP00000028479"/>
<dbReference type="Ensembl" id="ENSRNOT00000028479.7">
    <property type="protein sequence ID" value="ENSRNOP00000028479.6"/>
    <property type="gene ID" value="ENSRNOG00000020981.7"/>
</dbReference>
<dbReference type="GeneID" id="408245"/>
<dbReference type="KEGG" id="rno:408245"/>
<dbReference type="UCSC" id="RGD:1302970">
    <property type="organism name" value="rat"/>
</dbReference>
<dbReference type="AGR" id="RGD:1302970"/>
<dbReference type="CTD" id="74306"/>
<dbReference type="RGD" id="1302970">
    <property type="gene designation" value="Prss46"/>
</dbReference>
<dbReference type="eggNOG" id="KOG3627">
    <property type="taxonomic scope" value="Eukaryota"/>
</dbReference>
<dbReference type="GeneTree" id="ENSGT00940000162940"/>
<dbReference type="HOGENOM" id="CLU_006842_0_4_1"/>
<dbReference type="InParanoid" id="Q6IE63"/>
<dbReference type="OMA" id="ICNHRYQ"/>
<dbReference type="OrthoDB" id="10059102at2759"/>
<dbReference type="PRO" id="PR:Q6IE63"/>
<dbReference type="Proteomes" id="UP000002494">
    <property type="component" value="Chromosome 8"/>
</dbReference>
<dbReference type="Proteomes" id="UP000234681">
    <property type="component" value="Chromosome 5"/>
</dbReference>
<dbReference type="Bgee" id="ENSRNOG00000020981">
    <property type="expression patterns" value="Expressed in testis and 2 other cell types or tissues"/>
</dbReference>
<dbReference type="GO" id="GO:0005615">
    <property type="term" value="C:extracellular space"/>
    <property type="evidence" value="ECO:0000318"/>
    <property type="project" value="GO_Central"/>
</dbReference>
<dbReference type="GO" id="GO:0016020">
    <property type="term" value="C:membrane"/>
    <property type="evidence" value="ECO:0007669"/>
    <property type="project" value="UniProtKB-SubCell"/>
</dbReference>
<dbReference type="GO" id="GO:0004252">
    <property type="term" value="F:serine-type endopeptidase activity"/>
    <property type="evidence" value="ECO:0000318"/>
    <property type="project" value="GO_Central"/>
</dbReference>
<dbReference type="GO" id="GO:0006508">
    <property type="term" value="P:proteolysis"/>
    <property type="evidence" value="ECO:0000318"/>
    <property type="project" value="GO_Central"/>
</dbReference>
<dbReference type="CDD" id="cd00190">
    <property type="entry name" value="Tryp_SPc"/>
    <property type="match status" value="1"/>
</dbReference>
<dbReference type="FunFam" id="2.40.10.10:FF:000039">
    <property type="entry name" value="Brain-specific serine protease 4"/>
    <property type="match status" value="1"/>
</dbReference>
<dbReference type="Gene3D" id="2.40.10.10">
    <property type="entry name" value="Trypsin-like serine proteases"/>
    <property type="match status" value="1"/>
</dbReference>
<dbReference type="InterPro" id="IPR009003">
    <property type="entry name" value="Peptidase_S1_PA"/>
</dbReference>
<dbReference type="InterPro" id="IPR043504">
    <property type="entry name" value="Peptidase_S1_PA_chymotrypsin"/>
</dbReference>
<dbReference type="InterPro" id="IPR001314">
    <property type="entry name" value="Peptidase_S1A"/>
</dbReference>
<dbReference type="InterPro" id="IPR051487">
    <property type="entry name" value="Ser/Thr_Proteases_Immune/Dev"/>
</dbReference>
<dbReference type="InterPro" id="IPR001254">
    <property type="entry name" value="Trypsin_dom"/>
</dbReference>
<dbReference type="InterPro" id="IPR018114">
    <property type="entry name" value="TRYPSIN_HIS"/>
</dbReference>
<dbReference type="PANTHER" id="PTHR24256">
    <property type="entry name" value="TRYPTASE-RELATED"/>
    <property type="match status" value="1"/>
</dbReference>
<dbReference type="Pfam" id="PF00089">
    <property type="entry name" value="Trypsin"/>
    <property type="match status" value="1"/>
</dbReference>
<dbReference type="PRINTS" id="PR00722">
    <property type="entry name" value="CHYMOTRYPSIN"/>
</dbReference>
<dbReference type="SMART" id="SM00020">
    <property type="entry name" value="Tryp_SPc"/>
    <property type="match status" value="1"/>
</dbReference>
<dbReference type="SUPFAM" id="SSF50494">
    <property type="entry name" value="Trypsin-like serine proteases"/>
    <property type="match status" value="1"/>
</dbReference>
<dbReference type="PROSITE" id="PS50240">
    <property type="entry name" value="TRYPSIN_DOM"/>
    <property type="match status" value="1"/>
</dbReference>
<dbReference type="PROSITE" id="PS00134">
    <property type="entry name" value="TRYPSIN_HIS"/>
    <property type="match status" value="1"/>
</dbReference>
<name>PRS46_RAT</name>